<accession>A5GN79</accession>
<protein>
    <recommendedName>
        <fullName evidence="1">Large ribosomal subunit protein bL27</fullName>
    </recommendedName>
    <alternativeName>
        <fullName evidence="3">50S ribosomal protein L27</fullName>
    </alternativeName>
</protein>
<dbReference type="EMBL" id="CT971583">
    <property type="protein sequence ID" value="CAK24394.1"/>
    <property type="molecule type" value="Genomic_DNA"/>
</dbReference>
<dbReference type="SMR" id="A5GN79"/>
<dbReference type="STRING" id="32051.SynWH7803_1968"/>
<dbReference type="KEGG" id="syx:SynWH7803_1968"/>
<dbReference type="eggNOG" id="COG0211">
    <property type="taxonomic scope" value="Bacteria"/>
</dbReference>
<dbReference type="HOGENOM" id="CLU_095424_4_0_3"/>
<dbReference type="OrthoDB" id="9803474at2"/>
<dbReference type="Proteomes" id="UP000001566">
    <property type="component" value="Chromosome"/>
</dbReference>
<dbReference type="GO" id="GO:0022625">
    <property type="term" value="C:cytosolic large ribosomal subunit"/>
    <property type="evidence" value="ECO:0007669"/>
    <property type="project" value="TreeGrafter"/>
</dbReference>
<dbReference type="GO" id="GO:0003735">
    <property type="term" value="F:structural constituent of ribosome"/>
    <property type="evidence" value="ECO:0007669"/>
    <property type="project" value="InterPro"/>
</dbReference>
<dbReference type="GO" id="GO:0006412">
    <property type="term" value="P:translation"/>
    <property type="evidence" value="ECO:0007669"/>
    <property type="project" value="UniProtKB-UniRule"/>
</dbReference>
<dbReference type="FunFam" id="2.40.50.100:FF:000004">
    <property type="entry name" value="50S ribosomal protein L27"/>
    <property type="match status" value="1"/>
</dbReference>
<dbReference type="Gene3D" id="2.40.50.100">
    <property type="match status" value="1"/>
</dbReference>
<dbReference type="HAMAP" id="MF_00539">
    <property type="entry name" value="Ribosomal_bL27"/>
    <property type="match status" value="1"/>
</dbReference>
<dbReference type="InterPro" id="IPR001684">
    <property type="entry name" value="Ribosomal_bL27"/>
</dbReference>
<dbReference type="InterPro" id="IPR018261">
    <property type="entry name" value="Ribosomal_bL27_CS"/>
</dbReference>
<dbReference type="NCBIfam" id="TIGR00062">
    <property type="entry name" value="L27"/>
    <property type="match status" value="1"/>
</dbReference>
<dbReference type="PANTHER" id="PTHR15893:SF0">
    <property type="entry name" value="LARGE RIBOSOMAL SUBUNIT PROTEIN BL27M"/>
    <property type="match status" value="1"/>
</dbReference>
<dbReference type="PANTHER" id="PTHR15893">
    <property type="entry name" value="RIBOSOMAL PROTEIN L27"/>
    <property type="match status" value="1"/>
</dbReference>
<dbReference type="Pfam" id="PF01016">
    <property type="entry name" value="Ribosomal_L27"/>
    <property type="match status" value="1"/>
</dbReference>
<dbReference type="PRINTS" id="PR00063">
    <property type="entry name" value="RIBOSOMALL27"/>
</dbReference>
<dbReference type="SUPFAM" id="SSF110324">
    <property type="entry name" value="Ribosomal L27 protein-like"/>
    <property type="match status" value="1"/>
</dbReference>
<dbReference type="PROSITE" id="PS00831">
    <property type="entry name" value="RIBOSOMAL_L27"/>
    <property type="match status" value="1"/>
</dbReference>
<gene>
    <name evidence="1" type="primary">rpmA</name>
    <name evidence="1" type="synonym">rpl27</name>
    <name type="ordered locus">SynWH7803_1968</name>
</gene>
<feature type="chain" id="PRO_1000017632" description="Large ribosomal subunit protein bL27">
    <location>
        <begin position="1"/>
        <end position="89"/>
    </location>
</feature>
<feature type="region of interest" description="Disordered" evidence="2">
    <location>
        <begin position="1"/>
        <end position="24"/>
    </location>
</feature>
<sequence>MAHKKGTGSTRNGRDSNSKRLGVKAYGGESVTAGSILIRQRGTSVLPGVNVGQGKDDTLFALTDGVVKFETIRRGLRNRKRINVATAAG</sequence>
<comment type="similarity">
    <text evidence="1">Belongs to the bacterial ribosomal protein bL27 family.</text>
</comment>
<proteinExistence type="inferred from homology"/>
<reference key="1">
    <citation type="submission" date="2006-05" db="EMBL/GenBank/DDBJ databases">
        <authorList>
            <consortium name="Genoscope"/>
        </authorList>
    </citation>
    <scope>NUCLEOTIDE SEQUENCE [LARGE SCALE GENOMIC DNA]</scope>
    <source>
        <strain>WH7803</strain>
    </source>
</reference>
<name>RL27_SYNPW</name>
<organism>
    <name type="scientific">Synechococcus sp. (strain WH7803)</name>
    <dbReference type="NCBI Taxonomy" id="32051"/>
    <lineage>
        <taxon>Bacteria</taxon>
        <taxon>Bacillati</taxon>
        <taxon>Cyanobacteriota</taxon>
        <taxon>Cyanophyceae</taxon>
        <taxon>Synechococcales</taxon>
        <taxon>Synechococcaceae</taxon>
        <taxon>Synechococcus</taxon>
    </lineage>
</organism>
<keyword id="KW-1185">Reference proteome</keyword>
<keyword id="KW-0687">Ribonucleoprotein</keyword>
<keyword id="KW-0689">Ribosomal protein</keyword>
<evidence type="ECO:0000255" key="1">
    <source>
        <dbReference type="HAMAP-Rule" id="MF_00539"/>
    </source>
</evidence>
<evidence type="ECO:0000256" key="2">
    <source>
        <dbReference type="SAM" id="MobiDB-lite"/>
    </source>
</evidence>
<evidence type="ECO:0000305" key="3"/>